<organism>
    <name type="scientific">Homo sapiens</name>
    <name type="common">Human</name>
    <dbReference type="NCBI Taxonomy" id="9606"/>
    <lineage>
        <taxon>Eukaryota</taxon>
        <taxon>Metazoa</taxon>
        <taxon>Chordata</taxon>
        <taxon>Craniata</taxon>
        <taxon>Vertebrata</taxon>
        <taxon>Euteleostomi</taxon>
        <taxon>Mammalia</taxon>
        <taxon>Eutheria</taxon>
        <taxon>Euarchontoglires</taxon>
        <taxon>Primates</taxon>
        <taxon>Haplorrhini</taxon>
        <taxon>Catarrhini</taxon>
        <taxon>Hominidae</taxon>
        <taxon>Homo</taxon>
    </lineage>
</organism>
<comment type="function">
    <text evidence="6">Rod-specific cGMP phosphodiesterase that catalyzes the hydrolysis of 3',5'-cyclic GMP (PubMed:20940301). This protein participates in processes of transmission and amplification of the visual signal.</text>
</comment>
<comment type="catalytic activity">
    <reaction evidence="6">
        <text>3',5'-cyclic GMP + H2O = GMP + H(+)</text>
        <dbReference type="Rhea" id="RHEA:16957"/>
        <dbReference type="ChEBI" id="CHEBI:15377"/>
        <dbReference type="ChEBI" id="CHEBI:15378"/>
        <dbReference type="ChEBI" id="CHEBI:57746"/>
        <dbReference type="ChEBI" id="CHEBI:58115"/>
        <dbReference type="EC" id="3.1.4.35"/>
    </reaction>
    <physiologicalReaction direction="left-to-right" evidence="9">
        <dbReference type="Rhea" id="RHEA:16958"/>
    </physiologicalReaction>
</comment>
<comment type="cofactor">
    <cofactor evidence="1">
        <name>a divalent metal cation</name>
        <dbReference type="ChEBI" id="CHEBI:60240"/>
    </cofactor>
    <text evidence="1">Binds 2 divalent metal cations per subunit. Site 1 may preferentially bind zinc ions, while site 2 has a preference for magnesium and/or manganese ions.</text>
</comment>
<comment type="biophysicochemical properties">
    <kinetics>
        <KM evidence="6">20 uM for 3',5'-cyclic GMP (with the chimera containing the N-terminal regulatory GAF domains of PDE6C and the C-terminal catalytic domain of PDE6A)</KM>
    </kinetics>
</comment>
<comment type="subunit">
    <text>Oligomer composed of two catalytic chains (alpha and beta), an inhibitory chain (gamma) and the delta chain.</text>
</comment>
<comment type="subcellular location">
    <subcellularLocation>
        <location evidence="8">Cell membrane</location>
        <topology evidence="8">Lipid-anchor</topology>
        <orientation evidence="8">Cytoplasmic side</orientation>
    </subcellularLocation>
    <subcellularLocation>
        <location evidence="6">Cell projection</location>
        <location evidence="6">Cilium</location>
        <location evidence="6">Photoreceptor outer segment</location>
    </subcellularLocation>
</comment>
<comment type="disease" evidence="5 7">
    <disease id="DI-03032">
        <name>Retinitis pigmentosa 43</name>
        <acronym>RP43</acronym>
        <description>A retinal dystrophy belonging to the group of pigmentary retinopathies. Retinitis pigmentosa is characterized by retinal pigment deposits visible on fundus examination and primary loss of rod photoreceptor cells followed by secondary loss of cone photoreceptors. Patients typically have night vision blindness and loss of midperipheral visual field. As their condition progresses, they lose their far peripheral visual field and eventually central vision as well.</description>
        <dbReference type="MIM" id="613810"/>
    </disease>
    <text>The disease is caused by variants affecting the gene represented in this entry.</text>
</comment>
<comment type="similarity">
    <text evidence="8">Belongs to the cyclic nucleotide phosphodiesterase family.</text>
</comment>
<name>PDE6A_HUMAN</name>
<feature type="initiator methionine" description="Removed" evidence="2">
    <location>
        <position position="1"/>
    </location>
</feature>
<feature type="chain" id="PRO_0000198828" description="Rod cGMP-specific 3',5'-cyclic phosphodiesterase subunit alpha">
    <location>
        <begin position="2"/>
        <end position="857"/>
    </location>
</feature>
<feature type="propeptide" id="PRO_0000396697" description="Removed in mature form" evidence="1">
    <location>
        <begin position="858"/>
        <end position="860"/>
    </location>
</feature>
<feature type="domain" description="GAF 1">
    <location>
        <begin position="73"/>
        <end position="222"/>
    </location>
</feature>
<feature type="domain" description="GAF 2">
    <location>
        <begin position="254"/>
        <end position="431"/>
    </location>
</feature>
<feature type="domain" description="PDEase" evidence="3">
    <location>
        <begin position="483"/>
        <end position="816"/>
    </location>
</feature>
<feature type="region of interest" description="Disordered" evidence="4">
    <location>
        <begin position="821"/>
        <end position="860"/>
    </location>
</feature>
<feature type="compositionally biased region" description="Low complexity" evidence="4">
    <location>
        <begin position="830"/>
        <end position="851"/>
    </location>
</feature>
<feature type="active site" description="Proton donor" evidence="1">
    <location>
        <position position="559"/>
    </location>
</feature>
<feature type="binding site" evidence="1">
    <location>
        <position position="563"/>
    </location>
    <ligand>
        <name>a divalent metal cation</name>
        <dbReference type="ChEBI" id="CHEBI:60240"/>
        <label>1</label>
    </ligand>
</feature>
<feature type="binding site" evidence="1">
    <location>
        <position position="599"/>
    </location>
    <ligand>
        <name>a divalent metal cation</name>
        <dbReference type="ChEBI" id="CHEBI:60240"/>
        <label>1</label>
    </ligand>
</feature>
<feature type="binding site" evidence="1">
    <location>
        <position position="600"/>
    </location>
    <ligand>
        <name>a divalent metal cation</name>
        <dbReference type="ChEBI" id="CHEBI:60240"/>
        <label>1</label>
    </ligand>
</feature>
<feature type="binding site" evidence="1">
    <location>
        <position position="600"/>
    </location>
    <ligand>
        <name>a divalent metal cation</name>
        <dbReference type="ChEBI" id="CHEBI:60240"/>
        <label>2</label>
    </ligand>
</feature>
<feature type="binding site" evidence="1">
    <location>
        <position position="720"/>
    </location>
    <ligand>
        <name>a divalent metal cation</name>
        <dbReference type="ChEBI" id="CHEBI:60240"/>
        <label>1</label>
    </ligand>
</feature>
<feature type="modified residue" description="N-acetylglycine" evidence="2">
    <location>
        <position position="2"/>
    </location>
</feature>
<feature type="modified residue" description="Cysteine methyl ester" evidence="1">
    <location>
        <position position="857"/>
    </location>
</feature>
<feature type="lipid moiety-binding region" description="S-farnesyl cysteine" evidence="1">
    <location>
        <position position="857"/>
    </location>
</feature>
<feature type="sequence variant" id="VAR_025460" description="In RP43; dbSNP:rs750539462." evidence="5">
    <original>R</original>
    <variation>H</variation>
    <location>
        <position position="102"/>
    </location>
</feature>
<feature type="sequence variant" id="VAR_025461" description="In RP43; dbSNP:rs141252097." evidence="5">
    <original>R</original>
    <variation>S</variation>
    <location>
        <position position="102"/>
    </location>
</feature>
<feature type="sequence variant" id="VAR_047730" description="In dbSNP:rs35431421.">
    <original>A</original>
    <variation>T</variation>
    <location>
        <position position="145"/>
    </location>
</feature>
<feature type="sequence variant" id="VAR_025462" description="In dbSNP:rs10057110." evidence="5">
    <original>N</original>
    <variation>S</variation>
    <location>
        <position position="216"/>
    </location>
</feature>
<feature type="sequence variant" id="VAR_025463" description="In dbSNP:rs145608358." evidence="5">
    <original>V</original>
    <variation>A</variation>
    <location>
        <position position="277"/>
    </location>
</feature>
<feature type="sequence variant" id="VAR_025464" description="In dbSNP:rs114973968." evidence="5">
    <original>P</original>
    <variation>L</variation>
    <location>
        <position position="293"/>
    </location>
</feature>
<feature type="sequence variant" id="VAR_006049" description="In RP43; dbSNP:rs121918577." evidence="7">
    <original>S</original>
    <variation>R</variation>
    <location>
        <position position="344"/>
    </location>
</feature>
<feature type="sequence variant" id="VAR_025465" description="In dbSNP:rs61732059." evidence="5">
    <original>V</original>
    <variation>M</variation>
    <location>
        <position position="391"/>
    </location>
</feature>
<feature type="sequence variant" id="VAR_047731" description="In dbSNP:rs17711594.">
    <original>Q</original>
    <variation>H</variation>
    <location>
        <position position="492"/>
    </location>
</feature>
<feature type="sequence variant" id="VAR_025466" description="In RP43; dbSNP:rs139444207." evidence="5">
    <original>Q</original>
    <variation>K</variation>
    <location>
        <position position="569"/>
    </location>
</feature>
<feature type="sequence variant" id="VAR_025467" description="In RP43; dbSNP:rs755527251." evidence="5">
    <original>S</original>
    <variation>P</variation>
    <location>
        <position position="573"/>
    </location>
</feature>
<feature type="sequence variant" id="VAR_025468" description="In dbSNP:rs780450680." evidence="5">
    <original>K</original>
    <variation>Q</variation>
    <location>
        <position position="827"/>
    </location>
</feature>
<feature type="sequence variant" id="VAR_025469" description="In dbSNP:rs138315990." evidence="5">
    <original>G</original>
    <variation>V</variation>
    <location>
        <position position="850"/>
    </location>
</feature>
<feature type="sequence conflict" description="In Ref. 1; AAB69155." evidence="8" ref="1">
    <original>V</original>
    <variation>W</variation>
    <location>
        <position position="224"/>
    </location>
</feature>
<protein>
    <recommendedName>
        <fullName evidence="8">Rod cGMP-specific 3',5'-cyclic phosphodiesterase subunit alpha</fullName>
        <shortName>GMP-PDE alpha</shortName>
        <ecNumber evidence="6">3.1.4.35</ecNumber>
    </recommendedName>
    <alternativeName>
        <fullName>PDE V-B1</fullName>
    </alternativeName>
</protein>
<sequence length="860" mass="99547">MGEVTAEEVEKFLDSNIGFAKQYYNLHYRAKLISDLLGAKEAAVDFSNYHSPSSMEESEIIFDLLRDFQENLQTEKCIFNVMKKLCFLLQADRMSLFMYRTRNGIAELATRLFNVHKDAVLEDCLVMPDQEIVFPLDMGIVGHVAHSKKIANVPNTEEDEHFCDFVDILTEYKTKNILASPIMNGKDVVAIIMAVNKVDGSHFTKRDEEILLKYLNFANLIMKVYHLSYLHNCETRRGQILLWSGSKVFEELTDIERQFHKALYTVRAFLNCDRYSVGLLDMTKQKEFFDVWPVLMGEVPPYSGPRTPDGREINFYKVIDYILHGKEDIKVIPNPPPDHWALVSGLPAYVAQNGLICNIMNAPAEDFFAFQKEPLDESGWMIKNVLSMPIVNKKEEIVGVATFYNRKDGKPFDEMDETLMESLTQFLGWSVLNPDTYESMNKLENRKDIFQDIVKYHVKCDNEEIQKILKTREVYGKEPWECEEEELAEILQAELPDADKYEINKFHFSDLPLTELELVKCGIQMYYELKVVDKFHIPQEALVRFMYSLSKGYRKITYHNWRHGFNVGQTMFSLLVTGKLKRYFTDLEALAMVTAAFCHDIDHRGTNNLYQMKSQNPLAKLHGSSILERHHLEFGKTLLRDESLNIFQNLNRRQHEHAIHMMDIAIIATDLALYFKKRTMFQKIVDQSKTYESEQEWTQYMMLEQTRKEIVMAMMMTACDLSAITKPWEVQSQVALLVAAEFWEQGDLERTVLQQNPIPMMDRNKADELPKLQVGFIDFVCTFVYKEFSRFHEEITPMLDGITNNRKEWKALADEYDAKMKVQEEKKQKQQSAKSAAAGNQPGGNPSPGGATTSKSCCIQ</sequence>
<evidence type="ECO:0000250" key="1"/>
<evidence type="ECO:0000250" key="2">
    <source>
        <dbReference type="UniProtKB" id="P11541"/>
    </source>
</evidence>
<evidence type="ECO:0000255" key="3">
    <source>
        <dbReference type="PROSITE-ProRule" id="PRU01192"/>
    </source>
</evidence>
<evidence type="ECO:0000256" key="4">
    <source>
        <dbReference type="SAM" id="MobiDB-lite"/>
    </source>
</evidence>
<evidence type="ECO:0000269" key="5">
    <source>
    </source>
</evidence>
<evidence type="ECO:0000269" key="6">
    <source>
    </source>
</evidence>
<evidence type="ECO:0000269" key="7">
    <source>
    </source>
</evidence>
<evidence type="ECO:0000305" key="8"/>
<evidence type="ECO:0000305" key="9">
    <source>
    </source>
</evidence>
<evidence type="ECO:0000312" key="10">
    <source>
        <dbReference type="HGNC" id="HGNC:8785"/>
    </source>
</evidence>
<reference key="1">
    <citation type="journal article" date="1990" name="Genomics">
        <title>Molecular characterization of human and bovine rod photoreceptor cGMP phosphodiesterase alpha-subunit and chromosomal localization of the human gene.</title>
        <authorList>
            <person name="Pittler S.J."/>
            <person name="Baehr W."/>
            <person name="Wasmuth J.J."/>
            <person name="McConnell D.G."/>
            <person name="Champagne M.S."/>
            <person name="VanTuinen P."/>
            <person name="Ledbetter D."/>
            <person name="Davis R.L."/>
        </authorList>
    </citation>
    <scope>NUCLEOTIDE SEQUENCE [MRNA]</scope>
</reference>
<reference key="2">
    <citation type="submission" date="1995-05" db="EMBL/GenBank/DDBJ databases">
        <authorList>
            <person name="Pittler S.J."/>
            <person name="Baehr W."/>
            <person name="Wasmuth J.J."/>
            <person name="McConnell D.G."/>
            <person name="Champagne M.S."/>
            <person name="Vantuinen P."/>
            <person name="Ledbetter D."/>
            <person name="Davis R.L."/>
        </authorList>
    </citation>
    <scope>SEQUENCE REVISION TO 846-849</scope>
</reference>
<reference key="3">
    <citation type="submission" date="2005-09" db="EMBL/GenBank/DDBJ databases">
        <authorList>
            <person name="Mural R.J."/>
            <person name="Istrail S."/>
            <person name="Sutton G.G."/>
            <person name="Florea L."/>
            <person name="Halpern A.L."/>
            <person name="Mobarry C.M."/>
            <person name="Lippert R."/>
            <person name="Walenz B."/>
            <person name="Shatkay H."/>
            <person name="Dew I."/>
            <person name="Miller J.R."/>
            <person name="Flanigan M.J."/>
            <person name="Edwards N.J."/>
            <person name="Bolanos R."/>
            <person name="Fasulo D."/>
            <person name="Halldorsson B.V."/>
            <person name="Hannenhalli S."/>
            <person name="Turner R."/>
            <person name="Yooseph S."/>
            <person name="Lu F."/>
            <person name="Nusskern D.R."/>
            <person name="Shue B.C."/>
            <person name="Zheng X.H."/>
            <person name="Zhong F."/>
            <person name="Delcher A.L."/>
            <person name="Huson D.H."/>
            <person name="Kravitz S.A."/>
            <person name="Mouchard L."/>
            <person name="Reinert K."/>
            <person name="Remington K.A."/>
            <person name="Clark A.G."/>
            <person name="Waterman M.S."/>
            <person name="Eichler E.E."/>
            <person name="Adams M.D."/>
            <person name="Hunkapiller M.W."/>
            <person name="Myers E.W."/>
            <person name="Venter J.C."/>
        </authorList>
    </citation>
    <scope>NUCLEOTIDE SEQUENCE [LARGE SCALE GENOMIC DNA]</scope>
</reference>
<reference key="4">
    <citation type="journal article" date="2004" name="Genome Res.">
        <title>The status, quality, and expansion of the NIH full-length cDNA project: the Mammalian Gene Collection (MGC).</title>
        <authorList>
            <consortium name="The MGC Project Team"/>
        </authorList>
    </citation>
    <scope>NUCLEOTIDE SEQUENCE [LARGE SCALE MRNA]</scope>
    <source>
        <tissue>Eye</tissue>
    </source>
</reference>
<reference key="5">
    <citation type="journal article" date="2010" name="J. Biol. Chem.">
        <title>Rod phosphodiesterase-6 PDE6A and PDE6B subunits are enzymatically equivalent.</title>
        <authorList>
            <person name="Muradov H."/>
            <person name="Boyd K.K."/>
            <person name="Artemyev N.O."/>
        </authorList>
    </citation>
    <scope>FUNCTION</scope>
    <scope>CATALYTIC ACTIVITY</scope>
    <scope>BIOPHYSICOCHEMICAL PROPERTIES</scope>
    <scope>SUBCELLULAR LOCATION</scope>
</reference>
<reference key="6">
    <citation type="journal article" date="1995" name="Nat. Genet.">
        <title>Autosomal recessive retinitis pigmentosa caused by mutations in the alpha subunit of rod cGMP phosphodiesterase.</title>
        <authorList>
            <person name="Huang S.H."/>
            <person name="Pittler S.J."/>
            <person name="Huang X."/>
            <person name="Oliveira L."/>
            <person name="Berson E.L."/>
            <person name="Dryja T.P."/>
        </authorList>
    </citation>
    <scope>VARIANT RP43 ARG-344</scope>
</reference>
<reference key="7">
    <citation type="journal article" date="1999" name="Invest. Ophthalmol. Vis. Sci.">
        <title>Frequency of mutations in the gene encoding the alpha subunit of rod cGMP-phosphodiesterase in autosomal recessive retinitis pigmentosa.</title>
        <authorList>
            <person name="Dryja T.P."/>
            <person name="Rucinski D.E."/>
            <person name="Chen S.H."/>
            <person name="Berson E.L."/>
        </authorList>
    </citation>
    <scope>VARIANTS RP43 HIS-102; SER-102; LYS-569 AND PRO-573</scope>
    <scope>VARIANTS SER-216; ALA-277; LEU-293; MET-391; GLN-827 AND VAL-850</scope>
</reference>
<proteinExistence type="evidence at protein level"/>
<keyword id="KW-0007">Acetylation</keyword>
<keyword id="KW-1003">Cell membrane</keyword>
<keyword id="KW-0966">Cell projection</keyword>
<keyword id="KW-0140">cGMP</keyword>
<keyword id="KW-0225">Disease variant</keyword>
<keyword id="KW-0378">Hydrolase</keyword>
<keyword id="KW-0449">Lipoprotein</keyword>
<keyword id="KW-0472">Membrane</keyword>
<keyword id="KW-0479">Metal-binding</keyword>
<keyword id="KW-0488">Methylation</keyword>
<keyword id="KW-0636">Prenylation</keyword>
<keyword id="KW-1267">Proteomics identification</keyword>
<keyword id="KW-1185">Reference proteome</keyword>
<keyword id="KW-0677">Repeat</keyword>
<keyword id="KW-0682">Retinitis pigmentosa</keyword>
<keyword id="KW-0716">Sensory transduction</keyword>
<keyword id="KW-0844">Vision</keyword>
<gene>
    <name evidence="10" type="primary">PDE6A</name>
    <name type="synonym">PDEA</name>
</gene>
<dbReference type="EC" id="3.1.4.35" evidence="6"/>
<dbReference type="EMBL" id="M26061">
    <property type="protein sequence ID" value="AAB69155.1"/>
    <property type="molecule type" value="mRNA"/>
</dbReference>
<dbReference type="EMBL" id="CH471062">
    <property type="protein sequence ID" value="EAW61757.1"/>
    <property type="molecule type" value="Genomic_DNA"/>
</dbReference>
<dbReference type="EMBL" id="BC035909">
    <property type="protein sequence ID" value="AAH35909.1"/>
    <property type="molecule type" value="mRNA"/>
</dbReference>
<dbReference type="CCDS" id="CCDS4299.1"/>
<dbReference type="PIR" id="B34611">
    <property type="entry name" value="B34611"/>
</dbReference>
<dbReference type="RefSeq" id="NP_000431.2">
    <property type="nucleotide sequence ID" value="NM_000440.3"/>
</dbReference>
<dbReference type="SMR" id="P16499"/>
<dbReference type="BioGRID" id="111171">
    <property type="interactions" value="9"/>
</dbReference>
<dbReference type="CORUM" id="P16499"/>
<dbReference type="FunCoup" id="P16499">
    <property type="interactions" value="217"/>
</dbReference>
<dbReference type="IntAct" id="P16499">
    <property type="interactions" value="4"/>
</dbReference>
<dbReference type="STRING" id="9606.ENSP00000255266"/>
<dbReference type="BindingDB" id="P16499"/>
<dbReference type="ChEMBL" id="CHEMBL3878"/>
<dbReference type="DrugBank" id="DB00201">
    <property type="generic name" value="Caffeine"/>
</dbReference>
<dbReference type="DrugBank" id="DB09283">
    <property type="generic name" value="Trapidil"/>
</dbReference>
<dbReference type="DrugCentral" id="P16499"/>
<dbReference type="GuidetoPHARMACOLOGY" id="1312"/>
<dbReference type="iPTMnet" id="P16499"/>
<dbReference type="PhosphoSitePlus" id="P16499"/>
<dbReference type="BioMuta" id="PDE6A"/>
<dbReference type="DMDM" id="215274230"/>
<dbReference type="jPOST" id="P16499"/>
<dbReference type="MassIVE" id="P16499"/>
<dbReference type="PaxDb" id="9606-ENSP00000255266"/>
<dbReference type="PeptideAtlas" id="P16499"/>
<dbReference type="ProteomicsDB" id="53376"/>
<dbReference type="Antibodypedia" id="16063">
    <property type="antibodies" value="166 antibodies from 29 providers"/>
</dbReference>
<dbReference type="DNASU" id="5145"/>
<dbReference type="Ensembl" id="ENST00000255266.10">
    <property type="protein sequence ID" value="ENSP00000255266.5"/>
    <property type="gene ID" value="ENSG00000132915.12"/>
</dbReference>
<dbReference type="GeneID" id="5145"/>
<dbReference type="KEGG" id="hsa:5145"/>
<dbReference type="MANE-Select" id="ENST00000255266.10">
    <property type="protein sequence ID" value="ENSP00000255266.5"/>
    <property type="RefSeq nucleotide sequence ID" value="NM_000440.3"/>
    <property type="RefSeq protein sequence ID" value="NP_000431.2"/>
</dbReference>
<dbReference type="UCSC" id="uc003lrg.4">
    <property type="organism name" value="human"/>
</dbReference>
<dbReference type="AGR" id="HGNC:8785"/>
<dbReference type="CTD" id="5145"/>
<dbReference type="DisGeNET" id="5145"/>
<dbReference type="GeneCards" id="PDE6A"/>
<dbReference type="GeneReviews" id="PDE6A"/>
<dbReference type="HGNC" id="HGNC:8785">
    <property type="gene designation" value="PDE6A"/>
</dbReference>
<dbReference type="HPA" id="ENSG00000132915">
    <property type="expression patterns" value="Tissue enriched (retina)"/>
</dbReference>
<dbReference type="MalaCards" id="PDE6A"/>
<dbReference type="MIM" id="180071">
    <property type="type" value="gene"/>
</dbReference>
<dbReference type="MIM" id="613810">
    <property type="type" value="phenotype"/>
</dbReference>
<dbReference type="neXtProt" id="NX_P16499"/>
<dbReference type="OpenTargets" id="ENSG00000132915"/>
<dbReference type="Orphanet" id="791">
    <property type="disease" value="Retinitis pigmentosa"/>
</dbReference>
<dbReference type="PharmGKB" id="PA33133"/>
<dbReference type="VEuPathDB" id="HostDB:ENSG00000132915"/>
<dbReference type="eggNOG" id="KOG3689">
    <property type="taxonomic scope" value="Eukaryota"/>
</dbReference>
<dbReference type="GeneTree" id="ENSGT00940000161330"/>
<dbReference type="InParanoid" id="P16499"/>
<dbReference type="OMA" id="GPHFTKR"/>
<dbReference type="OrthoDB" id="546632at2759"/>
<dbReference type="PAN-GO" id="P16499">
    <property type="GO annotations" value="4 GO annotations based on evolutionary models"/>
</dbReference>
<dbReference type="PhylomeDB" id="P16499"/>
<dbReference type="TreeFam" id="TF316499"/>
<dbReference type="PathwayCommons" id="P16499"/>
<dbReference type="Reactome" id="R-HSA-2485179">
    <property type="pathway name" value="Activation of the phototransduction cascade"/>
</dbReference>
<dbReference type="Reactome" id="R-HSA-2514859">
    <property type="pathway name" value="Inactivation, recovery and regulation of the phototransduction cascade"/>
</dbReference>
<dbReference type="Reactome" id="R-HSA-4086398">
    <property type="pathway name" value="Ca2+ pathway"/>
</dbReference>
<dbReference type="SignaLink" id="P16499"/>
<dbReference type="SIGNOR" id="P16499"/>
<dbReference type="BioGRID-ORCS" id="5145">
    <property type="hits" value="11 hits in 1149 CRISPR screens"/>
</dbReference>
<dbReference type="ChiTaRS" id="PDE6A">
    <property type="organism name" value="human"/>
</dbReference>
<dbReference type="GeneWiki" id="PDE6A"/>
<dbReference type="GenomeRNAi" id="5145"/>
<dbReference type="Pharos" id="P16499">
    <property type="development level" value="Tclin"/>
</dbReference>
<dbReference type="PRO" id="PR:P16499"/>
<dbReference type="Proteomes" id="UP000005640">
    <property type="component" value="Chromosome 5"/>
</dbReference>
<dbReference type="RNAct" id="P16499">
    <property type="molecule type" value="protein"/>
</dbReference>
<dbReference type="Bgee" id="ENSG00000132915">
    <property type="expression patterns" value="Expressed in corpus epididymis and 57 other cell types or tissues"/>
</dbReference>
<dbReference type="ExpressionAtlas" id="P16499">
    <property type="expression patterns" value="baseline and differential"/>
</dbReference>
<dbReference type="GO" id="GO:0097381">
    <property type="term" value="C:photoreceptor disc membrane"/>
    <property type="evidence" value="ECO:0000304"/>
    <property type="project" value="Reactome"/>
</dbReference>
<dbReference type="GO" id="GO:0042622">
    <property type="term" value="C:photoreceptor outer segment membrane"/>
    <property type="evidence" value="ECO:0000318"/>
    <property type="project" value="GO_Central"/>
</dbReference>
<dbReference type="GO" id="GO:0005886">
    <property type="term" value="C:plasma membrane"/>
    <property type="evidence" value="ECO:0000304"/>
    <property type="project" value="Reactome"/>
</dbReference>
<dbReference type="GO" id="GO:0004115">
    <property type="term" value="F:3',5'-cyclic-AMP phosphodiesterase activity"/>
    <property type="evidence" value="ECO:0000318"/>
    <property type="project" value="GO_Central"/>
</dbReference>
<dbReference type="GO" id="GO:0047555">
    <property type="term" value="F:3',5'-cyclic-GMP phosphodiesterase activity"/>
    <property type="evidence" value="ECO:0000318"/>
    <property type="project" value="GO_Central"/>
</dbReference>
<dbReference type="GO" id="GO:0046872">
    <property type="term" value="F:metal ion binding"/>
    <property type="evidence" value="ECO:0007669"/>
    <property type="project" value="UniProtKB-KW"/>
</dbReference>
<dbReference type="GO" id="GO:0019933">
    <property type="term" value="P:cAMP-mediated signaling"/>
    <property type="evidence" value="ECO:0000318"/>
    <property type="project" value="GO_Central"/>
</dbReference>
<dbReference type="GO" id="GO:0060041">
    <property type="term" value="P:retina development in camera-type eye"/>
    <property type="evidence" value="ECO:0000318"/>
    <property type="project" value="GO_Central"/>
</dbReference>
<dbReference type="GO" id="GO:0007601">
    <property type="term" value="P:visual perception"/>
    <property type="evidence" value="ECO:0000304"/>
    <property type="project" value="ProtInc"/>
</dbReference>
<dbReference type="CDD" id="cd00077">
    <property type="entry name" value="HDc"/>
    <property type="match status" value="1"/>
</dbReference>
<dbReference type="FunFam" id="1.10.1300.10:FF:000005">
    <property type="entry name" value="Phosphodiesterase"/>
    <property type="match status" value="1"/>
</dbReference>
<dbReference type="FunFam" id="3.30.450.40:FF:000001">
    <property type="entry name" value="Phosphodiesterase"/>
    <property type="match status" value="1"/>
</dbReference>
<dbReference type="FunFam" id="3.30.450.40:FF:000010">
    <property type="entry name" value="Phosphodiesterase"/>
    <property type="match status" value="1"/>
</dbReference>
<dbReference type="Gene3D" id="3.30.450.40">
    <property type="match status" value="2"/>
</dbReference>
<dbReference type="Gene3D" id="1.10.1300.10">
    <property type="entry name" value="3'5'-cyclic nucleotide phosphodiesterase, catalytic domain"/>
    <property type="match status" value="1"/>
</dbReference>
<dbReference type="InterPro" id="IPR003018">
    <property type="entry name" value="GAF"/>
</dbReference>
<dbReference type="InterPro" id="IPR029016">
    <property type="entry name" value="GAF-like_dom_sf"/>
</dbReference>
<dbReference type="InterPro" id="IPR003607">
    <property type="entry name" value="HD/PDEase_dom"/>
</dbReference>
<dbReference type="InterPro" id="IPR023088">
    <property type="entry name" value="PDEase"/>
</dbReference>
<dbReference type="InterPro" id="IPR002073">
    <property type="entry name" value="PDEase_catalytic_dom"/>
</dbReference>
<dbReference type="InterPro" id="IPR036971">
    <property type="entry name" value="PDEase_catalytic_dom_sf"/>
</dbReference>
<dbReference type="InterPro" id="IPR023174">
    <property type="entry name" value="PDEase_CS"/>
</dbReference>
<dbReference type="PANTHER" id="PTHR11347">
    <property type="entry name" value="CYCLIC NUCLEOTIDE PHOSPHODIESTERASE"/>
    <property type="match status" value="1"/>
</dbReference>
<dbReference type="Pfam" id="PF01590">
    <property type="entry name" value="GAF"/>
    <property type="match status" value="2"/>
</dbReference>
<dbReference type="Pfam" id="PF00233">
    <property type="entry name" value="PDEase_I"/>
    <property type="match status" value="1"/>
</dbReference>
<dbReference type="PRINTS" id="PR00387">
    <property type="entry name" value="PDIESTERASE1"/>
</dbReference>
<dbReference type="SMART" id="SM00065">
    <property type="entry name" value="GAF"/>
    <property type="match status" value="2"/>
</dbReference>
<dbReference type="SMART" id="SM00471">
    <property type="entry name" value="HDc"/>
    <property type="match status" value="1"/>
</dbReference>
<dbReference type="SUPFAM" id="SSF55781">
    <property type="entry name" value="GAF domain-like"/>
    <property type="match status" value="2"/>
</dbReference>
<dbReference type="SUPFAM" id="SSF109604">
    <property type="entry name" value="HD-domain/PDEase-like"/>
    <property type="match status" value="1"/>
</dbReference>
<dbReference type="PROSITE" id="PS00126">
    <property type="entry name" value="PDEASE_I_1"/>
    <property type="match status" value="1"/>
</dbReference>
<dbReference type="PROSITE" id="PS51845">
    <property type="entry name" value="PDEASE_I_2"/>
    <property type="match status" value="1"/>
</dbReference>
<accession>P16499</accession>
<accession>Q0P638</accession>